<proteinExistence type="evidence at transcript level"/>
<organism>
    <name type="scientific">Xenopus tropicalis</name>
    <name type="common">Western clawed frog</name>
    <name type="synonym">Silurana tropicalis</name>
    <dbReference type="NCBI Taxonomy" id="8364"/>
    <lineage>
        <taxon>Eukaryota</taxon>
        <taxon>Metazoa</taxon>
        <taxon>Chordata</taxon>
        <taxon>Craniata</taxon>
        <taxon>Vertebrata</taxon>
        <taxon>Euteleostomi</taxon>
        <taxon>Amphibia</taxon>
        <taxon>Batrachia</taxon>
        <taxon>Anura</taxon>
        <taxon>Pipoidea</taxon>
        <taxon>Pipidae</taxon>
        <taxon>Xenopodinae</taxon>
        <taxon>Xenopus</taxon>
        <taxon>Silurana</taxon>
    </lineage>
</organism>
<dbReference type="EMBL" id="BC064214">
    <property type="protein sequence ID" value="AAH64214.1"/>
    <property type="molecule type" value="mRNA"/>
</dbReference>
<dbReference type="RefSeq" id="NP_989318.1">
    <property type="nucleotide sequence ID" value="NM_203987.1"/>
</dbReference>
<dbReference type="FunCoup" id="Q6P320">
    <property type="interactions" value="1519"/>
</dbReference>
<dbReference type="PaxDb" id="8364-ENSXETP00000005350"/>
<dbReference type="DNASU" id="394943"/>
<dbReference type="GeneID" id="394943"/>
<dbReference type="KEGG" id="xtr:394943"/>
<dbReference type="AGR" id="Xenbase:XB-GENE-5785975"/>
<dbReference type="CTD" id="26099"/>
<dbReference type="Xenbase" id="XB-GENE-5785975">
    <property type="gene designation" value="szrd1"/>
</dbReference>
<dbReference type="eggNOG" id="ENOG502RZH5">
    <property type="taxonomic scope" value="Eukaryota"/>
</dbReference>
<dbReference type="InParanoid" id="Q6P320"/>
<dbReference type="OrthoDB" id="5373615at2759"/>
<dbReference type="Proteomes" id="UP000008143">
    <property type="component" value="Chromosome 7"/>
</dbReference>
<dbReference type="InterPro" id="IPR024771">
    <property type="entry name" value="SUZ"/>
</dbReference>
<dbReference type="InterPro" id="IPR024642">
    <property type="entry name" value="SUZ-C"/>
</dbReference>
<dbReference type="InterPro" id="IPR039228">
    <property type="entry name" value="SZRD1"/>
</dbReference>
<dbReference type="PANTHER" id="PTHR31796">
    <property type="entry name" value="SUZ DOMAIN-CONTAINING PROTEIN 1"/>
    <property type="match status" value="1"/>
</dbReference>
<dbReference type="PANTHER" id="PTHR31796:SF2">
    <property type="entry name" value="SUZ DOMAIN-CONTAINING PROTEIN 1"/>
    <property type="match status" value="1"/>
</dbReference>
<dbReference type="Pfam" id="PF12752">
    <property type="entry name" value="SUZ"/>
    <property type="match status" value="1"/>
</dbReference>
<dbReference type="Pfam" id="PF12901">
    <property type="entry name" value="SUZ-C"/>
    <property type="match status" value="1"/>
</dbReference>
<dbReference type="PROSITE" id="PS51673">
    <property type="entry name" value="SUZ"/>
    <property type="match status" value="1"/>
</dbReference>
<dbReference type="PROSITE" id="PS51938">
    <property type="entry name" value="SUZ_C"/>
    <property type="match status" value="1"/>
</dbReference>
<name>SZRD1_XENTR</name>
<comment type="similarity">
    <text evidence="4">Belongs to the SZRD1 family.</text>
</comment>
<reference key="1">
    <citation type="submission" date="2003-12" db="EMBL/GenBank/DDBJ databases">
        <authorList>
            <consortium name="NIH - Xenopus Gene Collection (XGC) project"/>
        </authorList>
    </citation>
    <scope>NUCLEOTIDE SEQUENCE [LARGE SCALE MRNA]</scope>
    <source>
        <tissue>Gastrula</tissue>
    </source>
</reference>
<accession>Q6P320</accession>
<sequence length="152" mass="16853">MEEDEVAESWEEAADSGEIDRRLEKKLKISQRENSKSKSPPKAPVVIQDDSLPSGPPPQIRILKRPTSNGLASNPNACSRPAAPVKSLAQREAEYAEARKRILGSASPEEEQEKPVADRPARINQAEEIRQPNNVIRQPLGPDGSQGFRQRR</sequence>
<gene>
    <name type="primary">szrd1</name>
</gene>
<feature type="chain" id="PRO_0000303075" description="SUZ RNA-binding domain-containing">
    <location>
        <begin position="1"/>
        <end position="152"/>
    </location>
</feature>
<feature type="domain" description="SUZ" evidence="1">
    <location>
        <begin position="42"/>
        <end position="107"/>
    </location>
</feature>
<feature type="domain" description="SUZ-C" evidence="2">
    <location>
        <begin position="111"/>
        <end position="152"/>
    </location>
</feature>
<feature type="region of interest" description="Disordered" evidence="3">
    <location>
        <begin position="28"/>
        <end position="152"/>
    </location>
</feature>
<feature type="compositionally biased region" description="Polar residues" evidence="3">
    <location>
        <begin position="66"/>
        <end position="77"/>
    </location>
</feature>
<feature type="compositionally biased region" description="Basic and acidic residues" evidence="3">
    <location>
        <begin position="89"/>
        <end position="100"/>
    </location>
</feature>
<feature type="compositionally biased region" description="Basic and acidic residues" evidence="3">
    <location>
        <begin position="113"/>
        <end position="130"/>
    </location>
</feature>
<keyword id="KW-1185">Reference proteome</keyword>
<evidence type="ECO:0000255" key="1">
    <source>
        <dbReference type="PROSITE-ProRule" id="PRU01009"/>
    </source>
</evidence>
<evidence type="ECO:0000255" key="2">
    <source>
        <dbReference type="PROSITE-ProRule" id="PRU01287"/>
    </source>
</evidence>
<evidence type="ECO:0000256" key="3">
    <source>
        <dbReference type="SAM" id="MobiDB-lite"/>
    </source>
</evidence>
<evidence type="ECO:0000305" key="4"/>
<protein>
    <recommendedName>
        <fullName>SUZ RNA-binding domain-containing</fullName>
        <shortName>SUZ domain-containing protein 1</shortName>
    </recommendedName>
</protein>